<dbReference type="EMBL" id="EF455616">
    <property type="protein sequence ID" value="ABO61348.1"/>
    <property type="molecule type" value="mRNA"/>
</dbReference>
<dbReference type="PDB" id="5NCE">
    <property type="method" value="NMR"/>
    <property type="chains" value="A=34-83"/>
</dbReference>
<dbReference type="PDBsum" id="5NCE"/>
<dbReference type="BMRB" id="A4L7R7"/>
<dbReference type="SMR" id="A4L7R7"/>
<dbReference type="GO" id="GO:0005576">
    <property type="term" value="C:extracellular region"/>
    <property type="evidence" value="ECO:0000314"/>
    <property type="project" value="UniProtKB"/>
</dbReference>
<dbReference type="GO" id="GO:0050832">
    <property type="term" value="P:defense response to fungus"/>
    <property type="evidence" value="ECO:0000314"/>
    <property type="project" value="UniProtKB"/>
</dbReference>
<dbReference type="GO" id="GO:0031640">
    <property type="term" value="P:killing of cells of another organism"/>
    <property type="evidence" value="ECO:0007669"/>
    <property type="project" value="UniProtKB-KW"/>
</dbReference>
<dbReference type="CDD" id="cd00107">
    <property type="entry name" value="Knot1"/>
    <property type="match status" value="1"/>
</dbReference>
<dbReference type="Gene3D" id="3.30.30.10">
    <property type="entry name" value="Knottin, scorpion toxin-like"/>
    <property type="match status" value="1"/>
</dbReference>
<dbReference type="InterPro" id="IPR008176">
    <property type="entry name" value="Defensin_plant"/>
</dbReference>
<dbReference type="InterPro" id="IPR003614">
    <property type="entry name" value="Scorpion_toxin-like"/>
</dbReference>
<dbReference type="InterPro" id="IPR036574">
    <property type="entry name" value="Scorpion_toxin-like_sf"/>
</dbReference>
<dbReference type="PANTHER" id="PTHR33147">
    <property type="entry name" value="DEFENSIN-LIKE PROTEIN 1"/>
    <property type="match status" value="1"/>
</dbReference>
<dbReference type="PANTHER" id="PTHR33147:SF39">
    <property type="entry name" value="DRO1 PROTEIN-RELATED"/>
    <property type="match status" value="1"/>
</dbReference>
<dbReference type="Pfam" id="PF00304">
    <property type="entry name" value="Gamma-thionin"/>
    <property type="match status" value="1"/>
</dbReference>
<dbReference type="PRINTS" id="PR00288">
    <property type="entry name" value="PUROTHIONIN"/>
</dbReference>
<dbReference type="SMART" id="SM00505">
    <property type="entry name" value="Knot1"/>
    <property type="match status" value="1"/>
</dbReference>
<dbReference type="SUPFAM" id="SSF57095">
    <property type="entry name" value="Scorpion toxin-like"/>
    <property type="match status" value="1"/>
</dbReference>
<dbReference type="PROSITE" id="PS00940">
    <property type="entry name" value="GAMMA_THIONIN"/>
    <property type="match status" value="1"/>
</dbReference>
<sequence length="83" mass="9017">MAGKGVGSRLSTLFLLVLLVITIGMMQVQVAEGRMCKTPSGKFKGYCVNNTNCKNVCRTEGFPTGSCDFHVAGRKCYCYKPCP</sequence>
<evidence type="ECO:0000250" key="1">
    <source>
        <dbReference type="UniProtKB" id="O65740"/>
    </source>
</evidence>
<evidence type="ECO:0000250" key="2">
    <source>
        <dbReference type="UniProtKB" id="P32026"/>
    </source>
</evidence>
<evidence type="ECO:0000255" key="3"/>
<evidence type="ECO:0000269" key="4">
    <source>
    </source>
</evidence>
<evidence type="ECO:0000305" key="5"/>
<evidence type="ECO:0000312" key="6">
    <source>
        <dbReference type="EMBL" id="ABO61348.1"/>
    </source>
</evidence>
<evidence type="ECO:0007829" key="7">
    <source>
        <dbReference type="PDB" id="5NCE"/>
    </source>
</evidence>
<protein>
    <recommendedName>
        <fullName>Defensin-1</fullName>
    </recommendedName>
</protein>
<accession>A4L7R7</accession>
<comment type="function">
    <text evidence="4">Plant defense peptide. Has antifungal activity against B.cinera, F.oxysporum, F.solani and H.annosum with IC(50) values of 0.4 ug/ml, 2.9 ug/ml, 0.9 ug/ml and 1.4 ug/ml, respectively. Has modest antifungal activity against C.albicans and T.reesei. Causes thickening of F.oxysporum hyphae and an increase in their branching. Lacks antibacterial activity against the Gram-negative bacteria E.coli and E.carotovora.</text>
</comment>
<comment type="subcellular location">
    <subcellularLocation>
        <location evidence="1">Secreted</location>
    </subcellularLocation>
</comment>
<comment type="similarity">
    <text evidence="3">Belongs to the DEFL family.</text>
</comment>
<proteinExistence type="evidence at protein level"/>
<gene>
    <name evidence="6" type="primary">Def1</name>
</gene>
<feature type="signal peptide" evidence="3">
    <location>
        <begin position="1"/>
        <end position="33"/>
    </location>
</feature>
<feature type="chain" id="PRO_0000392921" description="Defensin-1">
    <location>
        <begin position="34"/>
        <end position="83"/>
    </location>
</feature>
<feature type="disulfide bond" evidence="2">
    <location>
        <begin position="36"/>
        <end position="82"/>
    </location>
</feature>
<feature type="disulfide bond" evidence="2">
    <location>
        <begin position="47"/>
        <end position="67"/>
    </location>
</feature>
<feature type="disulfide bond" evidence="2">
    <location>
        <begin position="53"/>
        <end position="76"/>
    </location>
</feature>
<feature type="disulfide bond" evidence="2">
    <location>
        <begin position="57"/>
        <end position="78"/>
    </location>
</feature>
<feature type="strand" evidence="7">
    <location>
        <begin position="35"/>
        <end position="39"/>
    </location>
</feature>
<feature type="helix" evidence="7">
    <location>
        <begin position="50"/>
        <end position="60"/>
    </location>
</feature>
<feature type="strand" evidence="7">
    <location>
        <begin position="63"/>
        <end position="68"/>
    </location>
</feature>
<feature type="strand" evidence="7">
    <location>
        <begin position="70"/>
        <end position="73"/>
    </location>
</feature>
<feature type="strand" evidence="7">
    <location>
        <begin position="75"/>
        <end position="81"/>
    </location>
</feature>
<organism>
    <name type="scientific">Pinus sylvestris</name>
    <name type="common">Scotch pine</name>
    <dbReference type="NCBI Taxonomy" id="3349"/>
    <lineage>
        <taxon>Eukaryota</taxon>
        <taxon>Viridiplantae</taxon>
        <taxon>Streptophyta</taxon>
        <taxon>Embryophyta</taxon>
        <taxon>Tracheophyta</taxon>
        <taxon>Spermatophyta</taxon>
        <taxon>Pinopsida</taxon>
        <taxon>Pinidae</taxon>
        <taxon>Conifers I</taxon>
        <taxon>Pinales</taxon>
        <taxon>Pinaceae</taxon>
        <taxon>Pinus</taxon>
        <taxon>Pinus subgen. Pinus</taxon>
    </lineage>
</organism>
<reference evidence="5 6" key="1">
    <citation type="journal article" date="2009" name="Peptides">
        <title>Purification and molecular cloning of antimicrobial peptides from Scots pine seedlings.</title>
        <authorList>
            <person name="Kovaleva V."/>
            <person name="Kiyamova R."/>
            <person name="Cramer R."/>
            <person name="Krynytskyy H."/>
            <person name="Gout I."/>
            <person name="Filonenko V."/>
            <person name="Gout R."/>
        </authorList>
    </citation>
    <scope>NUCLEOTIDE SEQUENCE [MRNA]</scope>
    <scope>FUNCTION</scope>
    <scope>IDENTIFICATION BY MASS SPECTROMETRY</scope>
    <source>
        <tissue evidence="6">Root</tissue>
    </source>
</reference>
<keyword id="KW-0002">3D-structure</keyword>
<keyword id="KW-0929">Antimicrobial</keyword>
<keyword id="KW-1015">Disulfide bond</keyword>
<keyword id="KW-0295">Fungicide</keyword>
<keyword id="KW-0611">Plant defense</keyword>
<keyword id="KW-0964">Secreted</keyword>
<keyword id="KW-0732">Signal</keyword>
<name>DEF1_PINSY</name>